<dbReference type="EC" id="5.3.1.16" evidence="1"/>
<dbReference type="EMBL" id="CP000554">
    <property type="protein sequence ID" value="ABM78488.1"/>
    <property type="molecule type" value="Genomic_DNA"/>
</dbReference>
<dbReference type="RefSeq" id="WP_011826375.1">
    <property type="nucleotide sequence ID" value="NC_008820.1"/>
</dbReference>
<dbReference type="SMR" id="A2CAH8"/>
<dbReference type="STRING" id="59922.P9303_17461"/>
<dbReference type="KEGG" id="pmf:P9303_17461"/>
<dbReference type="HOGENOM" id="CLU_048577_1_1_3"/>
<dbReference type="BioCyc" id="PMAR59922:G1G80-1515-MONOMER"/>
<dbReference type="UniPathway" id="UPA00031">
    <property type="reaction ID" value="UER00009"/>
</dbReference>
<dbReference type="Proteomes" id="UP000002274">
    <property type="component" value="Chromosome"/>
</dbReference>
<dbReference type="GO" id="GO:0005737">
    <property type="term" value="C:cytoplasm"/>
    <property type="evidence" value="ECO:0007669"/>
    <property type="project" value="UniProtKB-SubCell"/>
</dbReference>
<dbReference type="GO" id="GO:0003949">
    <property type="term" value="F:1-(5-phosphoribosyl)-5-[(5-phosphoribosylamino)methylideneamino]imidazole-4-carboxamide isomerase activity"/>
    <property type="evidence" value="ECO:0007669"/>
    <property type="project" value="UniProtKB-UniRule"/>
</dbReference>
<dbReference type="GO" id="GO:0000105">
    <property type="term" value="P:L-histidine biosynthetic process"/>
    <property type="evidence" value="ECO:0007669"/>
    <property type="project" value="UniProtKB-UniRule"/>
</dbReference>
<dbReference type="GO" id="GO:0000162">
    <property type="term" value="P:L-tryptophan biosynthetic process"/>
    <property type="evidence" value="ECO:0007669"/>
    <property type="project" value="TreeGrafter"/>
</dbReference>
<dbReference type="CDD" id="cd04732">
    <property type="entry name" value="HisA"/>
    <property type="match status" value="1"/>
</dbReference>
<dbReference type="FunFam" id="3.20.20.70:FF:000009">
    <property type="entry name" value="1-(5-phosphoribosyl)-5-[(5-phosphoribosylamino)methylideneamino] imidazole-4-carboxamide isomerase"/>
    <property type="match status" value="1"/>
</dbReference>
<dbReference type="Gene3D" id="3.20.20.70">
    <property type="entry name" value="Aldolase class I"/>
    <property type="match status" value="1"/>
</dbReference>
<dbReference type="HAMAP" id="MF_01014">
    <property type="entry name" value="HisA"/>
    <property type="match status" value="1"/>
</dbReference>
<dbReference type="InterPro" id="IPR013785">
    <property type="entry name" value="Aldolase_TIM"/>
</dbReference>
<dbReference type="InterPro" id="IPR006062">
    <property type="entry name" value="His_biosynth"/>
</dbReference>
<dbReference type="InterPro" id="IPR006063">
    <property type="entry name" value="HisA_bact_arch"/>
</dbReference>
<dbReference type="InterPro" id="IPR044524">
    <property type="entry name" value="Isoase_HisA-like"/>
</dbReference>
<dbReference type="InterPro" id="IPR023016">
    <property type="entry name" value="Isoase_HisA-like_bact"/>
</dbReference>
<dbReference type="InterPro" id="IPR011060">
    <property type="entry name" value="RibuloseP-bd_barrel"/>
</dbReference>
<dbReference type="NCBIfam" id="TIGR00007">
    <property type="entry name" value="1-(5-phosphoribosyl)-5-[(5-phosphoribosylamino)methylideneamino]imidazole-4-carboxamide isomerase"/>
    <property type="match status" value="1"/>
</dbReference>
<dbReference type="PANTHER" id="PTHR43090">
    <property type="entry name" value="1-(5-PHOSPHORIBOSYL)-5-[(5-PHOSPHORIBOSYLAMINO)METHYLIDENEAMINO] IMIDAZOLE-4-CARBOXAMIDE ISOMERASE"/>
    <property type="match status" value="1"/>
</dbReference>
<dbReference type="PANTHER" id="PTHR43090:SF2">
    <property type="entry name" value="1-(5-PHOSPHORIBOSYL)-5-[(5-PHOSPHORIBOSYLAMINO)METHYLIDENEAMINO] IMIDAZOLE-4-CARBOXAMIDE ISOMERASE"/>
    <property type="match status" value="1"/>
</dbReference>
<dbReference type="Pfam" id="PF00977">
    <property type="entry name" value="His_biosynth"/>
    <property type="match status" value="1"/>
</dbReference>
<dbReference type="SUPFAM" id="SSF51366">
    <property type="entry name" value="Ribulose-phoshate binding barrel"/>
    <property type="match status" value="1"/>
</dbReference>
<proteinExistence type="inferred from homology"/>
<feature type="chain" id="PRO_0000290509" description="1-(5-phosphoribosyl)-5-[(5-phosphoribosylamino)methylideneamino] imidazole-4-carboxamide isomerase">
    <location>
        <begin position="1"/>
        <end position="255"/>
    </location>
</feature>
<feature type="active site" description="Proton acceptor" evidence="1">
    <location>
        <position position="8"/>
    </location>
</feature>
<feature type="active site" description="Proton donor" evidence="1">
    <location>
        <position position="129"/>
    </location>
</feature>
<sequence>MEIIPAIDLLDSACVRLHQGDYAKVTRFSEDPVAQALSWQKQGATRLHLVDLDGAKSGEPVNDSCVRAITSALNIPVQLGGGVRTLERAEELLAYGLEQVILGTVAIEQPQLVKQLAQRNPGRIIVGIDAKNGKVATRGWISQSEVNATDLAADFNAAGIAAIISTDIATDGTLEGPNLESLRAMANASSVPLIASGGVGCMADLLSLLALEPYGVSGVIVGRALYDGKVDLKEAIRAIGDGRLQDPPSSKPLMA</sequence>
<organism>
    <name type="scientific">Prochlorococcus marinus (strain MIT 9303)</name>
    <dbReference type="NCBI Taxonomy" id="59922"/>
    <lineage>
        <taxon>Bacteria</taxon>
        <taxon>Bacillati</taxon>
        <taxon>Cyanobacteriota</taxon>
        <taxon>Cyanophyceae</taxon>
        <taxon>Synechococcales</taxon>
        <taxon>Prochlorococcaceae</taxon>
        <taxon>Prochlorococcus</taxon>
    </lineage>
</organism>
<evidence type="ECO:0000255" key="1">
    <source>
        <dbReference type="HAMAP-Rule" id="MF_01014"/>
    </source>
</evidence>
<accession>A2CAH8</accession>
<gene>
    <name evidence="1" type="primary">hisA</name>
    <name type="ordered locus">P9303_17461</name>
</gene>
<comment type="catalytic activity">
    <reaction evidence="1">
        <text>1-(5-phospho-beta-D-ribosyl)-5-[(5-phospho-beta-D-ribosylamino)methylideneamino]imidazole-4-carboxamide = 5-[(5-phospho-1-deoxy-D-ribulos-1-ylimino)methylamino]-1-(5-phospho-beta-D-ribosyl)imidazole-4-carboxamide</text>
        <dbReference type="Rhea" id="RHEA:15469"/>
        <dbReference type="ChEBI" id="CHEBI:58435"/>
        <dbReference type="ChEBI" id="CHEBI:58525"/>
        <dbReference type="EC" id="5.3.1.16"/>
    </reaction>
</comment>
<comment type="pathway">
    <text evidence="1">Amino-acid biosynthesis; L-histidine biosynthesis; L-histidine from 5-phospho-alpha-D-ribose 1-diphosphate: step 4/9.</text>
</comment>
<comment type="subcellular location">
    <subcellularLocation>
        <location evidence="1">Cytoplasm</location>
    </subcellularLocation>
</comment>
<comment type="similarity">
    <text evidence="1">Belongs to the HisA/HisF family.</text>
</comment>
<keyword id="KW-0028">Amino-acid biosynthesis</keyword>
<keyword id="KW-0963">Cytoplasm</keyword>
<keyword id="KW-0368">Histidine biosynthesis</keyword>
<keyword id="KW-0413">Isomerase</keyword>
<reference key="1">
    <citation type="journal article" date="2007" name="PLoS Genet.">
        <title>Patterns and implications of gene gain and loss in the evolution of Prochlorococcus.</title>
        <authorList>
            <person name="Kettler G.C."/>
            <person name="Martiny A.C."/>
            <person name="Huang K."/>
            <person name="Zucker J."/>
            <person name="Coleman M.L."/>
            <person name="Rodrigue S."/>
            <person name="Chen F."/>
            <person name="Lapidus A."/>
            <person name="Ferriera S."/>
            <person name="Johnson J."/>
            <person name="Steglich C."/>
            <person name="Church G.M."/>
            <person name="Richardson P."/>
            <person name="Chisholm S.W."/>
        </authorList>
    </citation>
    <scope>NUCLEOTIDE SEQUENCE [LARGE SCALE GENOMIC DNA]</scope>
    <source>
        <strain>MIT 9303</strain>
    </source>
</reference>
<name>HIS4_PROM3</name>
<protein>
    <recommendedName>
        <fullName evidence="1">1-(5-phosphoribosyl)-5-[(5-phosphoribosylamino)methylideneamino] imidazole-4-carboxamide isomerase</fullName>
        <ecNumber evidence="1">5.3.1.16</ecNumber>
    </recommendedName>
    <alternativeName>
        <fullName evidence="1">Phosphoribosylformimino-5-aminoimidazole carboxamide ribotide isomerase</fullName>
    </alternativeName>
</protein>